<dbReference type="EMBL" id="AF134806">
    <property type="protein sequence ID" value="AAD29691.1"/>
    <property type="molecule type" value="mRNA"/>
</dbReference>
<dbReference type="EMBL" id="BX284603">
    <property type="protein sequence ID" value="CAA84317.2"/>
    <property type="molecule type" value="Genomic_DNA"/>
</dbReference>
<dbReference type="PIR" id="T21721">
    <property type="entry name" value="T21721"/>
</dbReference>
<dbReference type="RefSeq" id="NP_497759.1">
    <property type="nucleotide sequence ID" value="NM_065358.5"/>
</dbReference>
<dbReference type="SMR" id="G5EDU6"/>
<dbReference type="FunCoup" id="G5EDU6">
    <property type="interactions" value="254"/>
</dbReference>
<dbReference type="IntAct" id="G5EDU6">
    <property type="interactions" value="17"/>
</dbReference>
<dbReference type="STRING" id="6239.F34D10.5.1"/>
<dbReference type="PaxDb" id="6239-F34D10.5"/>
<dbReference type="EnsemblMetazoa" id="F34D10.5.1">
    <property type="protein sequence ID" value="F34D10.5.1"/>
    <property type="gene ID" value="WBGene00003033"/>
</dbReference>
<dbReference type="GeneID" id="175485"/>
<dbReference type="KEGG" id="cel:CELE_F34D10.5"/>
<dbReference type="AGR" id="WB:WBGene00003033"/>
<dbReference type="CTD" id="175485"/>
<dbReference type="WormBase" id="F34D10.5">
    <property type="protein sequence ID" value="CE24940"/>
    <property type="gene ID" value="WBGene00003033"/>
    <property type="gene designation" value="lin-48"/>
</dbReference>
<dbReference type="eggNOG" id="KOG3576">
    <property type="taxonomic scope" value="Eukaryota"/>
</dbReference>
<dbReference type="GeneTree" id="ENSGT00940000165739"/>
<dbReference type="HOGENOM" id="CLU_079474_0_0_1"/>
<dbReference type="InParanoid" id="G5EDU6"/>
<dbReference type="OMA" id="YTTIYYP"/>
<dbReference type="OrthoDB" id="6508643at2759"/>
<dbReference type="PRO" id="PR:G5EDU6"/>
<dbReference type="Proteomes" id="UP000001940">
    <property type="component" value="Chromosome III"/>
</dbReference>
<dbReference type="Bgee" id="WBGene00003033">
    <property type="expression patterns" value="Expressed in pharyngeal muscle cell (C elegans) and 3 other cell types or tissues"/>
</dbReference>
<dbReference type="GO" id="GO:0005634">
    <property type="term" value="C:nucleus"/>
    <property type="evidence" value="ECO:0000314"/>
    <property type="project" value="WormBase"/>
</dbReference>
<dbReference type="GO" id="GO:0003700">
    <property type="term" value="F:DNA-binding transcription factor activity"/>
    <property type="evidence" value="ECO:0000250"/>
    <property type="project" value="WormBase"/>
</dbReference>
<dbReference type="GO" id="GO:0000981">
    <property type="term" value="F:DNA-binding transcription factor activity, RNA polymerase II-specific"/>
    <property type="evidence" value="ECO:0000318"/>
    <property type="project" value="GO_Central"/>
</dbReference>
<dbReference type="GO" id="GO:0000978">
    <property type="term" value="F:RNA polymerase II cis-regulatory region sequence-specific DNA binding"/>
    <property type="evidence" value="ECO:0000318"/>
    <property type="project" value="GO_Central"/>
</dbReference>
<dbReference type="GO" id="GO:0008270">
    <property type="term" value="F:zinc ion binding"/>
    <property type="evidence" value="ECO:0007669"/>
    <property type="project" value="UniProtKB-KW"/>
</dbReference>
<dbReference type="GO" id="GO:0009887">
    <property type="term" value="P:animal organ morphogenesis"/>
    <property type="evidence" value="ECO:0000315"/>
    <property type="project" value="UniProtKB"/>
</dbReference>
<dbReference type="GO" id="GO:0009913">
    <property type="term" value="P:epidermal cell differentiation"/>
    <property type="evidence" value="ECO:0000318"/>
    <property type="project" value="GO_Central"/>
</dbReference>
<dbReference type="GO" id="GO:0007442">
    <property type="term" value="P:hindgut morphogenesis"/>
    <property type="evidence" value="ECO:0000315"/>
    <property type="project" value="UniProtKB"/>
</dbReference>
<dbReference type="GO" id="GO:0045138">
    <property type="term" value="P:nematode male tail tip morphogenesis"/>
    <property type="evidence" value="ECO:0000315"/>
    <property type="project" value="UniProtKB"/>
</dbReference>
<dbReference type="GO" id="GO:0006355">
    <property type="term" value="P:regulation of DNA-templated transcription"/>
    <property type="evidence" value="ECO:0000304"/>
    <property type="project" value="WormBase"/>
</dbReference>
<dbReference type="GO" id="GO:0006357">
    <property type="term" value="P:regulation of transcription by RNA polymerase II"/>
    <property type="evidence" value="ECO:0000318"/>
    <property type="project" value="GO_Central"/>
</dbReference>
<dbReference type="GO" id="GO:0009651">
    <property type="term" value="P:response to salt stress"/>
    <property type="evidence" value="ECO:0000315"/>
    <property type="project" value="UniProtKB"/>
</dbReference>
<dbReference type="FunFam" id="3.30.160.60:FF:000246">
    <property type="entry name" value="Transcription factor Ovo-like 2"/>
    <property type="match status" value="1"/>
</dbReference>
<dbReference type="FunFam" id="3.30.160.60:FF:000452">
    <property type="entry name" value="Transcription factor Ovo-like 2"/>
    <property type="match status" value="1"/>
</dbReference>
<dbReference type="Gene3D" id="3.30.160.60">
    <property type="entry name" value="Classic Zinc Finger"/>
    <property type="match status" value="2"/>
</dbReference>
<dbReference type="InterPro" id="IPR027756">
    <property type="entry name" value="Ovo-like"/>
</dbReference>
<dbReference type="InterPro" id="IPR036236">
    <property type="entry name" value="Znf_C2H2_sf"/>
</dbReference>
<dbReference type="InterPro" id="IPR013087">
    <property type="entry name" value="Znf_C2H2_type"/>
</dbReference>
<dbReference type="PANTHER" id="PTHR10032:SF271">
    <property type="entry name" value="RH12261P-RELATED"/>
    <property type="match status" value="1"/>
</dbReference>
<dbReference type="PANTHER" id="PTHR10032">
    <property type="entry name" value="ZINC FINGER PROTEIN WITH KRAB AND SCAN DOMAINS"/>
    <property type="match status" value="1"/>
</dbReference>
<dbReference type="Pfam" id="PF00096">
    <property type="entry name" value="zf-C2H2"/>
    <property type="match status" value="2"/>
</dbReference>
<dbReference type="SMART" id="SM00355">
    <property type="entry name" value="ZnF_C2H2"/>
    <property type="match status" value="4"/>
</dbReference>
<dbReference type="SUPFAM" id="SSF57667">
    <property type="entry name" value="beta-beta-alpha zinc fingers"/>
    <property type="match status" value="2"/>
</dbReference>
<dbReference type="PROSITE" id="PS00028">
    <property type="entry name" value="ZINC_FINGER_C2H2_1"/>
    <property type="match status" value="3"/>
</dbReference>
<dbReference type="PROSITE" id="PS50157">
    <property type="entry name" value="ZINC_FINGER_C2H2_2"/>
    <property type="match status" value="3"/>
</dbReference>
<reference evidence="9" key="1">
    <citation type="submission" date="1999-03" db="EMBL/GenBank/DDBJ databases">
        <title>Characterization of mouse and Caenorhabditis elegans genes related to the Drosophila melanogaster ovo/svb gene.</title>
        <authorList>
            <person name="Schonbaum C.P."/>
            <person name="Fantes J."/>
            <person name="Mahowald A.P."/>
        </authorList>
    </citation>
    <scope>NUCLEOTIDE SEQUENCE [MRNA]</scope>
</reference>
<reference evidence="10" key="2">
    <citation type="journal article" date="1998" name="Science">
        <title>Genome sequence of the nematode C. elegans: a platform for investigating biology.</title>
        <authorList>
            <consortium name="The C. elegans sequencing consortium"/>
        </authorList>
    </citation>
    <scope>NUCLEOTIDE SEQUENCE [LARGE SCALE GENOMIC DNA]</scope>
    <source>
        <strain evidence="10">Bristol N2</strain>
    </source>
</reference>
<reference evidence="8" key="3">
    <citation type="journal article" date="1999" name="Genetics">
        <title>Characterization of seven genes affecting Caenorhabditis elegans hindgut development.</title>
        <authorList>
            <person name="Chamberlin H.M."/>
            <person name="Brown K.B."/>
            <person name="Sternberg P.W."/>
            <person name="Thomas J.H."/>
        </authorList>
    </citation>
    <scope>FUNCTION</scope>
    <scope>MUTAGENESIS OF HIS-179 AND PRO-188</scope>
</reference>
<reference evidence="8" key="4">
    <citation type="journal article" date="2001" name="Development">
        <title>EGL-38 Pax regulates the ovo-related gene lin-48 during Caenorhabditis elegans organ development.</title>
        <authorList>
            <person name="Johnson A.D."/>
            <person name="Fitzsimmons D."/>
            <person name="Hagman J."/>
            <person name="Chamberlin H.M."/>
        </authorList>
    </citation>
    <scope>FUNCTION</scope>
    <scope>SUBCELLULAR LOCATION</scope>
    <scope>DEVELOPMENTAL STAGE</scope>
    <scope>MUTAGENESIS OF ASP-175; HIS-179 AND PRO-188</scope>
</reference>
<reference evidence="8" key="5">
    <citation type="journal article" date="2002" name="Genes Dev.">
        <title>Multiple regulatory changes contribute to the evolution of the Caenorhabditis lin-48 ovo gene.</title>
        <authorList>
            <person name="Wang X."/>
            <person name="Chamberlin H.M."/>
        </authorList>
    </citation>
    <scope>FUNCTION</scope>
    <scope>DEVELOPMENTAL STAGE</scope>
    <scope>MUTAGENESIS OF HIS-179</scope>
</reference>
<reference evidence="8" key="6">
    <citation type="journal article" date="2004" name="Nat. Genet.">
        <title>Evolutionary innovation of the excretory system in Caenorhabditis elegans.</title>
        <authorList>
            <person name="Wang X."/>
            <person name="Chamberlin H.M."/>
        </authorList>
    </citation>
    <scope>FUNCTION</scope>
    <scope>MUTAGENESIS OF HIS-179</scope>
</reference>
<reference evidence="8" key="7">
    <citation type="journal article" date="2006" name="Dev. Biol.">
        <title>The bZip proteins CES-2 and ATF-2 alter the timing of transcription for a cell-specific target gene in C. elegans.</title>
        <authorList>
            <person name="Wang X."/>
            <person name="Jia H."/>
            <person name="Chamberlin H.M."/>
        </authorList>
    </citation>
    <scope>DEVELOPMENTAL STAGE</scope>
</reference>
<keyword id="KW-0479">Metal-binding</keyword>
<keyword id="KW-0539">Nucleus</keyword>
<keyword id="KW-1185">Reference proteome</keyword>
<keyword id="KW-0677">Repeat</keyword>
<keyword id="KW-0862">Zinc</keyword>
<keyword id="KW-0863">Zinc-finger</keyword>
<feature type="chain" id="PRO_0000456205" description="Transcription factor ovo-like homolog lin-48">
    <location>
        <begin position="1"/>
        <end position="280"/>
    </location>
</feature>
<feature type="zinc finger region" description="C2H2-type 1" evidence="2">
    <location>
        <begin position="133"/>
        <end position="155"/>
    </location>
</feature>
<feature type="zinc finger region" description="C2H2-type 2" evidence="2">
    <location>
        <begin position="161"/>
        <end position="183"/>
    </location>
</feature>
<feature type="zinc finger region" description="C2H2-type 3" evidence="2">
    <location>
        <begin position="189"/>
        <end position="212"/>
    </location>
</feature>
<feature type="zinc finger region" description="C2H2-type 4" evidence="2">
    <location>
        <begin position="228"/>
        <end position="251"/>
    </location>
</feature>
<feature type="mutagenesis site" description="In sy548; defects in hindgut development. Defects in the development of U, F and K' hindgut cells." evidence="4">
    <original>D</original>
    <variation>Y</variation>
    <location>
        <position position="175"/>
    </location>
</feature>
<feature type="mutagenesis site" description="In sa469; defects in hindgut development. Produces ectopic spicule cells. Defects in the development of U, F and K' hindgut cells. Morphological defects in excretory duct cells. Increases sensitivity to salt (NaCl) in the environment, reducing viability." evidence="3 4 5 6">
    <original>H</original>
    <variation>R</variation>
    <location>
        <position position="179"/>
    </location>
</feature>
<feature type="mutagenesis site" description="In sy234; defects in hindgut development. Abnormal F, B and U cell lineages in male tail. Produces ectopic spicule cells. Defects in the development of U, F and K' hindgut cells." evidence="3 4">
    <original>P</original>
    <variation>S</variation>
    <location>
        <position position="188"/>
    </location>
</feature>
<organism evidence="10">
    <name type="scientific">Caenorhabditis elegans</name>
    <dbReference type="NCBI Taxonomy" id="6239"/>
    <lineage>
        <taxon>Eukaryota</taxon>
        <taxon>Metazoa</taxon>
        <taxon>Ecdysozoa</taxon>
        <taxon>Nematoda</taxon>
        <taxon>Chromadorea</taxon>
        <taxon>Rhabditida</taxon>
        <taxon>Rhabditina</taxon>
        <taxon>Rhabditomorpha</taxon>
        <taxon>Rhabditoidea</taxon>
        <taxon>Rhabditidae</taxon>
        <taxon>Peloderinae</taxon>
        <taxon>Caenorhabditis</taxon>
    </lineage>
</organism>
<proteinExistence type="evidence at protein level"/>
<accession>G5EDU6</accession>
<comment type="function">
    <text evidence="1 3 4 5 6">Transcription factor (By similarity). Involved in development of the hindgut, the male tail, and the excretory duct cell (PubMed:10511553, PubMed:11532910, PubMed:12231624). Involved in modulating function of excretory duct cells (PubMed:14758362). Plays a role in left/right patterning of cell fates in the hindgut (PubMed:10511553, PubMed:11532910).</text>
</comment>
<comment type="subcellular location">
    <subcellularLocation>
        <location evidence="4">Nucleus</location>
    </subcellularLocation>
</comment>
<comment type="developmental stage">
    <text evidence="4 5 7">Expressed in late embryogenesis and into adulthood (PubMed:11532910, PubMed:16310763). Expression in the excretory duct cell begins in the majority of embryos by comma stage and persists throughout larval development into adulthood (PubMed:16310763). Expressed in L1 stage larvae in the excretory duct cell, neuronal support cells of the phasmid and labial sensory structures and a small number of additional unidentified cells in the head (PubMed:11532910, PubMed:12231624).</text>
</comment>
<comment type="miscellaneous">
    <text evidence="5 6">Differences in the regulation of lin-48 expression may explain, at least in part, differences in excretory duct morphology and function between C.elegans and the related species C.briggsae.</text>
</comment>
<gene>
    <name evidence="11" type="primary">lin-48</name>
    <name evidence="11" type="ORF">F34D10.5</name>
</gene>
<evidence type="ECO:0000250" key="1">
    <source>
        <dbReference type="UniProtKB" id="Q9BRP0"/>
    </source>
</evidence>
<evidence type="ECO:0000255" key="2">
    <source>
        <dbReference type="PROSITE-ProRule" id="PRU00042"/>
    </source>
</evidence>
<evidence type="ECO:0000269" key="3">
    <source>
    </source>
</evidence>
<evidence type="ECO:0000269" key="4">
    <source>
    </source>
</evidence>
<evidence type="ECO:0000269" key="5">
    <source>
    </source>
</evidence>
<evidence type="ECO:0000269" key="6">
    <source>
    </source>
</evidence>
<evidence type="ECO:0000269" key="7">
    <source>
    </source>
</evidence>
<evidence type="ECO:0000305" key="8"/>
<evidence type="ECO:0000312" key="9">
    <source>
        <dbReference type="EMBL" id="AAD29691.1"/>
    </source>
</evidence>
<evidence type="ECO:0000312" key="10">
    <source>
        <dbReference type="Proteomes" id="UP000001940"/>
    </source>
</evidence>
<evidence type="ECO:0000312" key="11">
    <source>
        <dbReference type="WormBase" id="F34D10.5"/>
    </source>
</evidence>
<sequence length="280" mass="31603">MDSRVWLPLIGAHLLPRDISVITQMIANNNNTSISRSSTNSSKPEEKNSKKFLIERFLDDDPSPPASILSPSPKAAIPSPIINPAVEFVNGGYGVKNPLAPLISSFETTSIPCSTVSPSSLISSSKDEFQDSLTCHICGKKFGLQRLLNRHIKCHSDLKRYLCTFCGKGFNDTFDLKRHTRTHTGVRPYKCEQCEKSFTQRCSLESHLRKVHGVTHQYAYKERRSKVFVCEDCGYTDEKFEVYLSHIKVVHPFSAAYLRFTQLQKKNSSMKPEQLSKISL</sequence>
<protein>
    <recommendedName>
        <fullName evidence="8">Transcription factor ovo-like homolog lin-48</fullName>
    </recommendedName>
    <alternativeName>
        <fullName evidence="11">Abnormal cell lineage protein 48</fullName>
    </alternativeName>
</protein>
<name>OVOLH_CAEEL</name>